<gene>
    <name type="primary">hisE</name>
    <name type="ordered locus">BMEI2040</name>
</gene>
<feature type="chain" id="PRO_0000136352" description="Phosphoribosyl-ATP pyrophosphatase">
    <location>
        <begin position="1"/>
        <end position="107"/>
    </location>
</feature>
<reference key="1">
    <citation type="journal article" date="2002" name="Proc. Natl. Acad. Sci. U.S.A.">
        <title>The genome sequence of the facultative intracellular pathogen Brucella melitensis.</title>
        <authorList>
            <person name="DelVecchio V.G."/>
            <person name="Kapatral V."/>
            <person name="Redkar R.J."/>
            <person name="Patra G."/>
            <person name="Mujer C."/>
            <person name="Los T."/>
            <person name="Ivanova N."/>
            <person name="Anderson I."/>
            <person name="Bhattacharyya A."/>
            <person name="Lykidis A."/>
            <person name="Reznik G."/>
            <person name="Jablonski L."/>
            <person name="Larsen N."/>
            <person name="D'Souza M."/>
            <person name="Bernal A."/>
            <person name="Mazur M."/>
            <person name="Goltsman E."/>
            <person name="Selkov E."/>
            <person name="Elzer P.H."/>
            <person name="Hagius S."/>
            <person name="O'Callaghan D."/>
            <person name="Letesson J.-J."/>
            <person name="Haselkorn R."/>
            <person name="Kyrpides N.C."/>
            <person name="Overbeek R."/>
        </authorList>
    </citation>
    <scope>NUCLEOTIDE SEQUENCE [LARGE SCALE GENOMIC DNA]</scope>
    <source>
        <strain>ATCC 23456 / CCUG 17765 / NCTC 10094 / 16M</strain>
    </source>
</reference>
<name>HIS2_BRUME</name>
<dbReference type="EC" id="3.6.1.31"/>
<dbReference type="EMBL" id="AE008917">
    <property type="protein sequence ID" value="AAL53221.1"/>
    <property type="status" value="ALT_INIT"/>
    <property type="molecule type" value="Genomic_DNA"/>
</dbReference>
<dbReference type="PIR" id="AB3507">
    <property type="entry name" value="AB3507"/>
</dbReference>
<dbReference type="RefSeq" id="WP_002965152.1">
    <property type="nucleotide sequence ID" value="NZ_GG703778.1"/>
</dbReference>
<dbReference type="SMR" id="P64351"/>
<dbReference type="KEGG" id="bme:BMEI2040"/>
<dbReference type="KEGG" id="bmel:DK63_1453"/>
<dbReference type="PATRIC" id="fig|224914.52.peg.1530"/>
<dbReference type="eggNOG" id="COG0140">
    <property type="taxonomic scope" value="Bacteria"/>
</dbReference>
<dbReference type="PhylomeDB" id="P64351"/>
<dbReference type="UniPathway" id="UPA00031">
    <property type="reaction ID" value="UER00007"/>
</dbReference>
<dbReference type="Proteomes" id="UP000000419">
    <property type="component" value="Chromosome I"/>
</dbReference>
<dbReference type="GO" id="GO:0005737">
    <property type="term" value="C:cytoplasm"/>
    <property type="evidence" value="ECO:0007669"/>
    <property type="project" value="UniProtKB-SubCell"/>
</dbReference>
<dbReference type="GO" id="GO:0005524">
    <property type="term" value="F:ATP binding"/>
    <property type="evidence" value="ECO:0007669"/>
    <property type="project" value="UniProtKB-KW"/>
</dbReference>
<dbReference type="GO" id="GO:0004636">
    <property type="term" value="F:phosphoribosyl-ATP diphosphatase activity"/>
    <property type="evidence" value="ECO:0007669"/>
    <property type="project" value="UniProtKB-UniRule"/>
</dbReference>
<dbReference type="GO" id="GO:0000105">
    <property type="term" value="P:L-histidine biosynthetic process"/>
    <property type="evidence" value="ECO:0007669"/>
    <property type="project" value="UniProtKB-UniRule"/>
</dbReference>
<dbReference type="CDD" id="cd11534">
    <property type="entry name" value="NTP-PPase_HisIE_like"/>
    <property type="match status" value="1"/>
</dbReference>
<dbReference type="Gene3D" id="1.10.287.1080">
    <property type="entry name" value="MazG-like"/>
    <property type="match status" value="1"/>
</dbReference>
<dbReference type="HAMAP" id="MF_01020">
    <property type="entry name" value="HisE"/>
    <property type="match status" value="1"/>
</dbReference>
<dbReference type="InterPro" id="IPR008179">
    <property type="entry name" value="HisE"/>
</dbReference>
<dbReference type="InterPro" id="IPR021130">
    <property type="entry name" value="PRib-ATP_PPHydrolase-like"/>
</dbReference>
<dbReference type="NCBIfam" id="TIGR03188">
    <property type="entry name" value="histidine_hisI"/>
    <property type="match status" value="1"/>
</dbReference>
<dbReference type="NCBIfam" id="NF001613">
    <property type="entry name" value="PRK00400.1-5"/>
    <property type="match status" value="1"/>
</dbReference>
<dbReference type="PANTHER" id="PTHR42945">
    <property type="entry name" value="HISTIDINE BIOSYNTHESIS BIFUNCTIONAL PROTEIN"/>
    <property type="match status" value="1"/>
</dbReference>
<dbReference type="PANTHER" id="PTHR42945:SF9">
    <property type="entry name" value="HISTIDINE BIOSYNTHESIS BIFUNCTIONAL PROTEIN HISIE"/>
    <property type="match status" value="1"/>
</dbReference>
<dbReference type="Pfam" id="PF01503">
    <property type="entry name" value="PRA-PH"/>
    <property type="match status" value="1"/>
</dbReference>
<dbReference type="SUPFAM" id="SSF101386">
    <property type="entry name" value="all-alpha NTP pyrophosphatases"/>
    <property type="match status" value="1"/>
</dbReference>
<comment type="catalytic activity">
    <reaction>
        <text>1-(5-phospho-beta-D-ribosyl)-ATP + H2O = 1-(5-phospho-beta-D-ribosyl)-5'-AMP + diphosphate + H(+)</text>
        <dbReference type="Rhea" id="RHEA:22828"/>
        <dbReference type="ChEBI" id="CHEBI:15377"/>
        <dbReference type="ChEBI" id="CHEBI:15378"/>
        <dbReference type="ChEBI" id="CHEBI:33019"/>
        <dbReference type="ChEBI" id="CHEBI:59457"/>
        <dbReference type="ChEBI" id="CHEBI:73183"/>
        <dbReference type="EC" id="3.6.1.31"/>
    </reaction>
</comment>
<comment type="pathway">
    <text>Amino-acid biosynthesis; L-histidine biosynthesis; L-histidine from 5-phospho-alpha-D-ribose 1-diphosphate: step 2/9.</text>
</comment>
<comment type="subcellular location">
    <subcellularLocation>
        <location evidence="1">Cytoplasm</location>
    </subcellularLocation>
</comment>
<comment type="similarity">
    <text evidence="2">Belongs to the PRA-PH family.</text>
</comment>
<comment type="sequence caution" evidence="2">
    <conflict type="erroneous initiation">
        <sequence resource="EMBL-CDS" id="AAL53221"/>
    </conflict>
</comment>
<proteinExistence type="inferred from homology"/>
<protein>
    <recommendedName>
        <fullName>Phosphoribosyl-ATP pyrophosphatase</fullName>
        <shortName>PRA-PH</shortName>
        <ecNumber>3.6.1.31</ecNumber>
    </recommendedName>
</protein>
<accession>P64351</accession>
<accession>Q8YE38</accession>
<sequence length="107" mass="11253">MSQFTLADLERIVAERASVTDGTSYTASLVAKGQPKAAQKLGEEAVETVIAAVSGDRAGVVSESADLLYHLAVVWNIAGVALEDVLQELQRRTAQTGLAEKASRPKG</sequence>
<evidence type="ECO:0000250" key="1"/>
<evidence type="ECO:0000305" key="2"/>
<organism>
    <name type="scientific">Brucella melitensis biotype 1 (strain ATCC 23456 / CCUG 17765 / NCTC 10094 / 16M)</name>
    <dbReference type="NCBI Taxonomy" id="224914"/>
    <lineage>
        <taxon>Bacteria</taxon>
        <taxon>Pseudomonadati</taxon>
        <taxon>Pseudomonadota</taxon>
        <taxon>Alphaproteobacteria</taxon>
        <taxon>Hyphomicrobiales</taxon>
        <taxon>Brucellaceae</taxon>
        <taxon>Brucella/Ochrobactrum group</taxon>
        <taxon>Brucella</taxon>
    </lineage>
</organism>
<keyword id="KW-0028">Amino-acid biosynthesis</keyword>
<keyword id="KW-0067">ATP-binding</keyword>
<keyword id="KW-0963">Cytoplasm</keyword>
<keyword id="KW-0368">Histidine biosynthesis</keyword>
<keyword id="KW-0378">Hydrolase</keyword>
<keyword id="KW-0547">Nucleotide-binding</keyword>